<protein>
    <recommendedName>
        <fullName>Uncharacterized protein AF_2113</fullName>
    </recommendedName>
</protein>
<sequence length="99" mass="11831">MVSIKEHLEELLESFDYSGDVEERIRLLRAAIGRIGNMFYGTENEEIYADQVRRIKLRLRELRETYATSEDNWRELMDNLEELRDQIERLAIRGGIIEK</sequence>
<reference key="1">
    <citation type="journal article" date="1997" name="Nature">
        <title>The complete genome sequence of the hyperthermophilic, sulphate-reducing archaeon Archaeoglobus fulgidus.</title>
        <authorList>
            <person name="Klenk H.-P."/>
            <person name="Clayton R.A."/>
            <person name="Tomb J.-F."/>
            <person name="White O."/>
            <person name="Nelson K.E."/>
            <person name="Ketchum K.A."/>
            <person name="Dodson R.J."/>
            <person name="Gwinn M.L."/>
            <person name="Hickey E.K."/>
            <person name="Peterson J.D."/>
            <person name="Richardson D.L."/>
            <person name="Kerlavage A.R."/>
            <person name="Graham D.E."/>
            <person name="Kyrpides N.C."/>
            <person name="Fleischmann R.D."/>
            <person name="Quackenbush J."/>
            <person name="Lee N.H."/>
            <person name="Sutton G.G."/>
            <person name="Gill S.R."/>
            <person name="Kirkness E.F."/>
            <person name="Dougherty B.A."/>
            <person name="McKenney K."/>
            <person name="Adams M.D."/>
            <person name="Loftus B.J."/>
            <person name="Peterson S.N."/>
            <person name="Reich C.I."/>
            <person name="McNeil L.K."/>
            <person name="Badger J.H."/>
            <person name="Glodek A."/>
            <person name="Zhou L."/>
            <person name="Overbeek R."/>
            <person name="Gocayne J.D."/>
            <person name="Weidman J.F."/>
            <person name="McDonald L.A."/>
            <person name="Utterback T.R."/>
            <person name="Cotton M.D."/>
            <person name="Spriggs T."/>
            <person name="Artiach P."/>
            <person name="Kaine B.P."/>
            <person name="Sykes S.M."/>
            <person name="Sadow P.W."/>
            <person name="D'Andrea K.P."/>
            <person name="Bowman C."/>
            <person name="Fujii C."/>
            <person name="Garland S.A."/>
            <person name="Mason T.M."/>
            <person name="Olsen G.J."/>
            <person name="Fraser C.M."/>
            <person name="Smith H.O."/>
            <person name="Woese C.R."/>
            <person name="Venter J.C."/>
        </authorList>
    </citation>
    <scope>NUCLEOTIDE SEQUENCE [LARGE SCALE GENOMIC DNA]</scope>
    <source>
        <strain>ATCC 49558 / DSM 4304 / JCM 9628 / NBRC 100126 / VC-16</strain>
    </source>
</reference>
<dbReference type="EMBL" id="AE000782">
    <property type="protein sequence ID" value="AAB89154.1"/>
    <property type="molecule type" value="Genomic_DNA"/>
</dbReference>
<dbReference type="PIR" id="A69514">
    <property type="entry name" value="A69514"/>
</dbReference>
<dbReference type="RefSeq" id="WP_010879604.1">
    <property type="nucleotide sequence ID" value="NC_000917.1"/>
</dbReference>
<dbReference type="SMR" id="O28167"/>
<dbReference type="STRING" id="224325.AF_2113"/>
<dbReference type="PaxDb" id="224325-AF_2113"/>
<dbReference type="EnsemblBacteria" id="AAB89154">
    <property type="protein sequence ID" value="AAB89154"/>
    <property type="gene ID" value="AF_2113"/>
</dbReference>
<dbReference type="KEGG" id="afu:AF_2113"/>
<dbReference type="eggNOG" id="arCOG12213">
    <property type="taxonomic scope" value="Archaea"/>
</dbReference>
<dbReference type="HOGENOM" id="CLU_2313623_0_0_2"/>
<dbReference type="OrthoDB" id="384233at2157"/>
<dbReference type="Proteomes" id="UP000002199">
    <property type="component" value="Chromosome"/>
</dbReference>
<gene>
    <name type="ordered locus">AF_2113</name>
</gene>
<keyword id="KW-0175">Coiled coil</keyword>
<keyword id="KW-1185">Reference proteome</keyword>
<name>Y2113_ARCFU</name>
<evidence type="ECO:0000255" key="1"/>
<accession>O28167</accession>
<proteinExistence type="predicted"/>
<organism>
    <name type="scientific">Archaeoglobus fulgidus (strain ATCC 49558 / DSM 4304 / JCM 9628 / NBRC 100126 / VC-16)</name>
    <dbReference type="NCBI Taxonomy" id="224325"/>
    <lineage>
        <taxon>Archaea</taxon>
        <taxon>Methanobacteriati</taxon>
        <taxon>Methanobacteriota</taxon>
        <taxon>Archaeoglobi</taxon>
        <taxon>Archaeoglobales</taxon>
        <taxon>Archaeoglobaceae</taxon>
        <taxon>Archaeoglobus</taxon>
    </lineage>
</organism>
<feature type="chain" id="PRO_0000128092" description="Uncharacterized protein AF_2113">
    <location>
        <begin position="1"/>
        <end position="99"/>
    </location>
</feature>
<feature type="coiled-coil region" evidence="1">
    <location>
        <begin position="43"/>
        <end position="95"/>
    </location>
</feature>